<dbReference type="EC" id="3.1.26.11" evidence="1"/>
<dbReference type="EMBL" id="AE015927">
    <property type="protein sequence ID" value="AAO36680.1"/>
    <property type="status" value="ALT_INIT"/>
    <property type="molecule type" value="Genomic_DNA"/>
</dbReference>
<dbReference type="RefSeq" id="WP_035124379.1">
    <property type="nucleotide sequence ID" value="NC_004557.1"/>
</dbReference>
<dbReference type="SMR" id="Q892B5"/>
<dbReference type="STRING" id="212717.CTC_02190"/>
<dbReference type="GeneID" id="24254264"/>
<dbReference type="KEGG" id="ctc:CTC_02190"/>
<dbReference type="HOGENOM" id="CLU_031317_2_1_9"/>
<dbReference type="OrthoDB" id="9800940at2"/>
<dbReference type="Proteomes" id="UP000001412">
    <property type="component" value="Chromosome"/>
</dbReference>
<dbReference type="GO" id="GO:0042781">
    <property type="term" value="F:3'-tRNA processing endoribonuclease activity"/>
    <property type="evidence" value="ECO:0007669"/>
    <property type="project" value="UniProtKB-UniRule"/>
</dbReference>
<dbReference type="GO" id="GO:0008270">
    <property type="term" value="F:zinc ion binding"/>
    <property type="evidence" value="ECO:0007669"/>
    <property type="project" value="UniProtKB-UniRule"/>
</dbReference>
<dbReference type="CDD" id="cd07717">
    <property type="entry name" value="RNaseZ_ZiPD-like_MBL-fold"/>
    <property type="match status" value="1"/>
</dbReference>
<dbReference type="Gene3D" id="3.60.15.10">
    <property type="entry name" value="Ribonuclease Z/Hydroxyacylglutathione hydrolase-like"/>
    <property type="match status" value="1"/>
</dbReference>
<dbReference type="HAMAP" id="MF_01818">
    <property type="entry name" value="RNase_Z_BN"/>
    <property type="match status" value="1"/>
</dbReference>
<dbReference type="InterPro" id="IPR001279">
    <property type="entry name" value="Metallo-B-lactamas"/>
</dbReference>
<dbReference type="InterPro" id="IPR036866">
    <property type="entry name" value="RibonucZ/Hydroxyglut_hydro"/>
</dbReference>
<dbReference type="InterPro" id="IPR013471">
    <property type="entry name" value="RNase_Z/BN"/>
</dbReference>
<dbReference type="NCBIfam" id="NF000801">
    <property type="entry name" value="PRK00055.1-3"/>
    <property type="match status" value="1"/>
</dbReference>
<dbReference type="NCBIfam" id="TIGR02651">
    <property type="entry name" value="RNase_Z"/>
    <property type="match status" value="1"/>
</dbReference>
<dbReference type="PANTHER" id="PTHR46018">
    <property type="entry name" value="ZINC PHOSPHODIESTERASE ELAC PROTEIN 1"/>
    <property type="match status" value="1"/>
</dbReference>
<dbReference type="PANTHER" id="PTHR46018:SF2">
    <property type="entry name" value="ZINC PHOSPHODIESTERASE ELAC PROTEIN 1"/>
    <property type="match status" value="1"/>
</dbReference>
<dbReference type="Pfam" id="PF00753">
    <property type="entry name" value="Lactamase_B"/>
    <property type="match status" value="1"/>
</dbReference>
<dbReference type="SUPFAM" id="SSF56281">
    <property type="entry name" value="Metallo-hydrolase/oxidoreductase"/>
    <property type="match status" value="1"/>
</dbReference>
<comment type="function">
    <text evidence="1">Zinc phosphodiesterase, which displays some tRNA 3'-processing endonuclease activity. Probably involved in tRNA maturation, by removing a 3'-trailer from precursor tRNA.</text>
</comment>
<comment type="catalytic activity">
    <reaction evidence="1">
        <text>Endonucleolytic cleavage of RNA, removing extra 3' nucleotides from tRNA precursor, generating 3' termini of tRNAs. A 3'-hydroxy group is left at the tRNA terminus and a 5'-phosphoryl group is left at the trailer molecule.</text>
        <dbReference type="EC" id="3.1.26.11"/>
    </reaction>
</comment>
<comment type="cofactor">
    <cofactor evidence="1">
        <name>Zn(2+)</name>
        <dbReference type="ChEBI" id="CHEBI:29105"/>
    </cofactor>
    <text evidence="1">Binds 2 Zn(2+) ions.</text>
</comment>
<comment type="subunit">
    <text evidence="1">Homodimer.</text>
</comment>
<comment type="similarity">
    <text evidence="1">Belongs to the RNase Z family.</text>
</comment>
<comment type="sequence caution" evidence="2">
    <conflict type="erroneous initiation">
        <sequence resource="EMBL-CDS" id="AAO36680"/>
    </conflict>
    <text>Extended N-terminus.</text>
</comment>
<gene>
    <name evidence="1" type="primary">rnz</name>
    <name type="ordered locus">CTC_02190</name>
</gene>
<protein>
    <recommendedName>
        <fullName evidence="1">Ribonuclease Z</fullName>
        <shortName evidence="1">RNase Z</shortName>
        <ecNumber evidence="1">3.1.26.11</ecNumber>
    </recommendedName>
    <alternativeName>
        <fullName evidence="1">tRNA 3 endonuclease</fullName>
    </alternativeName>
    <alternativeName>
        <fullName evidence="1">tRNase Z</fullName>
    </alternativeName>
</protein>
<organism>
    <name type="scientific">Clostridium tetani (strain Massachusetts / E88)</name>
    <dbReference type="NCBI Taxonomy" id="212717"/>
    <lineage>
        <taxon>Bacteria</taxon>
        <taxon>Bacillati</taxon>
        <taxon>Bacillota</taxon>
        <taxon>Clostridia</taxon>
        <taxon>Eubacteriales</taxon>
        <taxon>Clostridiaceae</taxon>
        <taxon>Clostridium</taxon>
    </lineage>
</organism>
<feature type="chain" id="PRO_0000155861" description="Ribonuclease Z">
    <location>
        <begin position="1"/>
        <end position="312"/>
    </location>
</feature>
<feature type="active site" description="Proton acceptor" evidence="1">
    <location>
        <position position="65"/>
    </location>
</feature>
<feature type="binding site" evidence="1">
    <location>
        <position position="61"/>
    </location>
    <ligand>
        <name>Zn(2+)</name>
        <dbReference type="ChEBI" id="CHEBI:29105"/>
        <label>1</label>
        <note>catalytic</note>
    </ligand>
</feature>
<feature type="binding site" evidence="1">
    <location>
        <position position="63"/>
    </location>
    <ligand>
        <name>Zn(2+)</name>
        <dbReference type="ChEBI" id="CHEBI:29105"/>
        <label>1</label>
        <note>catalytic</note>
    </ligand>
</feature>
<feature type="binding site" evidence="1">
    <location>
        <position position="65"/>
    </location>
    <ligand>
        <name>Zn(2+)</name>
        <dbReference type="ChEBI" id="CHEBI:29105"/>
        <label>2</label>
        <note>catalytic</note>
    </ligand>
</feature>
<feature type="binding site" evidence="1">
    <location>
        <position position="66"/>
    </location>
    <ligand>
        <name>Zn(2+)</name>
        <dbReference type="ChEBI" id="CHEBI:29105"/>
        <label>2</label>
        <note>catalytic</note>
    </ligand>
</feature>
<feature type="binding site" evidence="1">
    <location>
        <position position="148"/>
    </location>
    <ligand>
        <name>Zn(2+)</name>
        <dbReference type="ChEBI" id="CHEBI:29105"/>
        <label>1</label>
        <note>catalytic</note>
    </ligand>
</feature>
<feature type="binding site" evidence="1">
    <location>
        <position position="216"/>
    </location>
    <ligand>
        <name>Zn(2+)</name>
        <dbReference type="ChEBI" id="CHEBI:29105"/>
        <label>1</label>
        <note>catalytic</note>
    </ligand>
</feature>
<feature type="binding site" evidence="1">
    <location>
        <position position="216"/>
    </location>
    <ligand>
        <name>Zn(2+)</name>
        <dbReference type="ChEBI" id="CHEBI:29105"/>
        <label>2</label>
        <note>catalytic</note>
    </ligand>
</feature>
<feature type="binding site" evidence="1">
    <location>
        <position position="275"/>
    </location>
    <ligand>
        <name>Zn(2+)</name>
        <dbReference type="ChEBI" id="CHEBI:29105"/>
        <label>2</label>
        <note>catalytic</note>
    </ligand>
</feature>
<name>RNZ_CLOTE</name>
<evidence type="ECO:0000255" key="1">
    <source>
        <dbReference type="HAMAP-Rule" id="MF_01818"/>
    </source>
</evidence>
<evidence type="ECO:0000305" key="2"/>
<proteinExistence type="inferred from homology"/>
<keyword id="KW-0255">Endonuclease</keyword>
<keyword id="KW-0378">Hydrolase</keyword>
<keyword id="KW-0479">Metal-binding</keyword>
<keyword id="KW-0540">Nuclease</keyword>
<keyword id="KW-1185">Reference proteome</keyword>
<keyword id="KW-0819">tRNA processing</keyword>
<keyword id="KW-0862">Zinc</keyword>
<accession>Q892B5</accession>
<sequence>MIDITLLGTGGGMPTPERNLSAAILNYKGRKILIDCGEGTQVSMKISKTGFKNIDIICITHWHGDHIVGLPGLLATMGNSGRKEPLTIIGPVGIGEIIKGLTVIVPYIPYELNVIEATKESLCFTINKENLLLSSKGEIIINTLEVEHSSPCIAYRFDVKRKPKFNLEKALDNKVPKVIWNLLQRGGNVEFEGNLYESSMVLGEERKGIKFSFVTDTLPIPELIPFVKKSDLLICESNYGQDSDVDKAIKNKHMTFSQAAQIAKSGEVKELILTHFSPAIEDPEEFIHFAKDIFPKAQIGKDRMIISIDFQN</sequence>
<reference key="1">
    <citation type="journal article" date="2003" name="Proc. Natl. Acad. Sci. U.S.A.">
        <title>The genome sequence of Clostridium tetani, the causative agent of tetanus disease.</title>
        <authorList>
            <person name="Brueggemann H."/>
            <person name="Baeumer S."/>
            <person name="Fricke W.F."/>
            <person name="Wiezer A."/>
            <person name="Liesegang H."/>
            <person name="Decker I."/>
            <person name="Herzberg C."/>
            <person name="Martinez-Arias R."/>
            <person name="Merkl R."/>
            <person name="Henne A."/>
            <person name="Gottschalk G."/>
        </authorList>
    </citation>
    <scope>NUCLEOTIDE SEQUENCE [LARGE SCALE GENOMIC DNA]</scope>
    <source>
        <strain>Massachusetts / E88</strain>
    </source>
</reference>